<feature type="chain" id="PRO_1000000887" description="Adenylosuccinate synthetase">
    <location>
        <begin position="1"/>
        <end position="430"/>
    </location>
</feature>
<feature type="active site" description="Proton acceptor" evidence="1">
    <location>
        <position position="13"/>
    </location>
</feature>
<feature type="active site" description="Proton donor" evidence="1">
    <location>
        <position position="41"/>
    </location>
</feature>
<feature type="binding site" evidence="1">
    <location>
        <begin position="12"/>
        <end position="18"/>
    </location>
    <ligand>
        <name>GTP</name>
        <dbReference type="ChEBI" id="CHEBI:37565"/>
    </ligand>
</feature>
<feature type="binding site" description="in other chain" evidence="1">
    <location>
        <begin position="13"/>
        <end position="16"/>
    </location>
    <ligand>
        <name>IMP</name>
        <dbReference type="ChEBI" id="CHEBI:58053"/>
        <note>ligand shared between dimeric partners</note>
    </ligand>
</feature>
<feature type="binding site" evidence="1">
    <location>
        <position position="13"/>
    </location>
    <ligand>
        <name>Mg(2+)</name>
        <dbReference type="ChEBI" id="CHEBI:18420"/>
    </ligand>
</feature>
<feature type="binding site" description="in other chain" evidence="1">
    <location>
        <begin position="38"/>
        <end position="41"/>
    </location>
    <ligand>
        <name>IMP</name>
        <dbReference type="ChEBI" id="CHEBI:58053"/>
        <note>ligand shared between dimeric partners</note>
    </ligand>
</feature>
<feature type="binding site" evidence="1">
    <location>
        <begin position="40"/>
        <end position="42"/>
    </location>
    <ligand>
        <name>GTP</name>
        <dbReference type="ChEBI" id="CHEBI:37565"/>
    </ligand>
</feature>
<feature type="binding site" evidence="1">
    <location>
        <position position="40"/>
    </location>
    <ligand>
        <name>Mg(2+)</name>
        <dbReference type="ChEBI" id="CHEBI:18420"/>
    </ligand>
</feature>
<feature type="binding site" description="in other chain" evidence="1">
    <location>
        <position position="130"/>
    </location>
    <ligand>
        <name>IMP</name>
        <dbReference type="ChEBI" id="CHEBI:58053"/>
        <note>ligand shared between dimeric partners</note>
    </ligand>
</feature>
<feature type="binding site" evidence="1">
    <location>
        <position position="144"/>
    </location>
    <ligand>
        <name>IMP</name>
        <dbReference type="ChEBI" id="CHEBI:58053"/>
        <note>ligand shared between dimeric partners</note>
    </ligand>
</feature>
<feature type="binding site" description="in other chain" evidence="1">
    <location>
        <position position="225"/>
    </location>
    <ligand>
        <name>IMP</name>
        <dbReference type="ChEBI" id="CHEBI:58053"/>
        <note>ligand shared between dimeric partners</note>
    </ligand>
</feature>
<feature type="binding site" description="in other chain" evidence="1">
    <location>
        <position position="240"/>
    </location>
    <ligand>
        <name>IMP</name>
        <dbReference type="ChEBI" id="CHEBI:58053"/>
        <note>ligand shared between dimeric partners</note>
    </ligand>
</feature>
<feature type="binding site" evidence="1">
    <location>
        <begin position="300"/>
        <end position="306"/>
    </location>
    <ligand>
        <name>substrate</name>
    </ligand>
</feature>
<feature type="binding site" description="in other chain" evidence="1">
    <location>
        <position position="304"/>
    </location>
    <ligand>
        <name>IMP</name>
        <dbReference type="ChEBI" id="CHEBI:58053"/>
        <note>ligand shared between dimeric partners</note>
    </ligand>
</feature>
<feature type="binding site" evidence="1">
    <location>
        <position position="306"/>
    </location>
    <ligand>
        <name>GTP</name>
        <dbReference type="ChEBI" id="CHEBI:37565"/>
    </ligand>
</feature>
<feature type="binding site" evidence="1">
    <location>
        <begin position="332"/>
        <end position="334"/>
    </location>
    <ligand>
        <name>GTP</name>
        <dbReference type="ChEBI" id="CHEBI:37565"/>
    </ligand>
</feature>
<feature type="binding site" evidence="1">
    <location>
        <begin position="414"/>
        <end position="416"/>
    </location>
    <ligand>
        <name>GTP</name>
        <dbReference type="ChEBI" id="CHEBI:37565"/>
    </ligand>
</feature>
<name>PURA_PELPD</name>
<gene>
    <name evidence="1" type="primary">purA</name>
    <name type="ordered locus">Ppro_0518</name>
</gene>
<keyword id="KW-0963">Cytoplasm</keyword>
<keyword id="KW-0342">GTP-binding</keyword>
<keyword id="KW-0436">Ligase</keyword>
<keyword id="KW-0460">Magnesium</keyword>
<keyword id="KW-0479">Metal-binding</keyword>
<keyword id="KW-0547">Nucleotide-binding</keyword>
<keyword id="KW-0658">Purine biosynthesis</keyword>
<keyword id="KW-1185">Reference proteome</keyword>
<proteinExistence type="inferred from homology"/>
<protein>
    <recommendedName>
        <fullName evidence="1">Adenylosuccinate synthetase</fullName>
        <shortName evidence="1">AMPSase</shortName>
        <shortName evidence="1">AdSS</shortName>
        <ecNumber evidence="1">6.3.4.4</ecNumber>
    </recommendedName>
    <alternativeName>
        <fullName evidence="1">IMP--aspartate ligase</fullName>
    </alternativeName>
</protein>
<reference key="1">
    <citation type="submission" date="2006-10" db="EMBL/GenBank/DDBJ databases">
        <title>Complete sequence of chromosome of Pelobacter propionicus DSM 2379.</title>
        <authorList>
            <consortium name="US DOE Joint Genome Institute"/>
            <person name="Copeland A."/>
            <person name="Lucas S."/>
            <person name="Lapidus A."/>
            <person name="Barry K."/>
            <person name="Detter J.C."/>
            <person name="Glavina del Rio T."/>
            <person name="Hammon N."/>
            <person name="Israni S."/>
            <person name="Dalin E."/>
            <person name="Tice H."/>
            <person name="Pitluck S."/>
            <person name="Saunders E."/>
            <person name="Brettin T."/>
            <person name="Bruce D."/>
            <person name="Han C."/>
            <person name="Tapia R."/>
            <person name="Schmutz J."/>
            <person name="Larimer F."/>
            <person name="Land M."/>
            <person name="Hauser L."/>
            <person name="Kyrpides N."/>
            <person name="Kim E."/>
            <person name="Lovley D."/>
            <person name="Richardson P."/>
        </authorList>
    </citation>
    <scope>NUCLEOTIDE SEQUENCE [LARGE SCALE GENOMIC DNA]</scope>
    <source>
        <strain>DSM 2379 / NBRC 103807 / OttBd1</strain>
    </source>
</reference>
<dbReference type="EC" id="6.3.4.4" evidence="1"/>
<dbReference type="EMBL" id="CP000482">
    <property type="protein sequence ID" value="ABK98149.1"/>
    <property type="molecule type" value="Genomic_DNA"/>
</dbReference>
<dbReference type="RefSeq" id="WP_011734463.1">
    <property type="nucleotide sequence ID" value="NC_008609.1"/>
</dbReference>
<dbReference type="SMR" id="A1ALC9"/>
<dbReference type="STRING" id="338966.Ppro_0518"/>
<dbReference type="KEGG" id="ppd:Ppro_0518"/>
<dbReference type="eggNOG" id="COG0104">
    <property type="taxonomic scope" value="Bacteria"/>
</dbReference>
<dbReference type="HOGENOM" id="CLU_029848_0_0_7"/>
<dbReference type="OrthoDB" id="9807553at2"/>
<dbReference type="UniPathway" id="UPA00075">
    <property type="reaction ID" value="UER00335"/>
</dbReference>
<dbReference type="Proteomes" id="UP000006732">
    <property type="component" value="Chromosome"/>
</dbReference>
<dbReference type="GO" id="GO:0005737">
    <property type="term" value="C:cytoplasm"/>
    <property type="evidence" value="ECO:0007669"/>
    <property type="project" value="UniProtKB-SubCell"/>
</dbReference>
<dbReference type="GO" id="GO:0004019">
    <property type="term" value="F:adenylosuccinate synthase activity"/>
    <property type="evidence" value="ECO:0007669"/>
    <property type="project" value="UniProtKB-UniRule"/>
</dbReference>
<dbReference type="GO" id="GO:0005525">
    <property type="term" value="F:GTP binding"/>
    <property type="evidence" value="ECO:0007669"/>
    <property type="project" value="UniProtKB-UniRule"/>
</dbReference>
<dbReference type="GO" id="GO:0000287">
    <property type="term" value="F:magnesium ion binding"/>
    <property type="evidence" value="ECO:0007669"/>
    <property type="project" value="UniProtKB-UniRule"/>
</dbReference>
<dbReference type="GO" id="GO:0044208">
    <property type="term" value="P:'de novo' AMP biosynthetic process"/>
    <property type="evidence" value="ECO:0007669"/>
    <property type="project" value="UniProtKB-UniRule"/>
</dbReference>
<dbReference type="GO" id="GO:0046040">
    <property type="term" value="P:IMP metabolic process"/>
    <property type="evidence" value="ECO:0007669"/>
    <property type="project" value="TreeGrafter"/>
</dbReference>
<dbReference type="CDD" id="cd03108">
    <property type="entry name" value="AdSS"/>
    <property type="match status" value="1"/>
</dbReference>
<dbReference type="FunFam" id="1.10.300.10:FF:000001">
    <property type="entry name" value="Adenylosuccinate synthetase"/>
    <property type="match status" value="1"/>
</dbReference>
<dbReference type="FunFam" id="3.90.170.10:FF:000001">
    <property type="entry name" value="Adenylosuccinate synthetase"/>
    <property type="match status" value="1"/>
</dbReference>
<dbReference type="Gene3D" id="3.40.440.10">
    <property type="entry name" value="Adenylosuccinate Synthetase, subunit A, domain 1"/>
    <property type="match status" value="1"/>
</dbReference>
<dbReference type="Gene3D" id="1.10.300.10">
    <property type="entry name" value="Adenylosuccinate Synthetase, subunit A, domain 2"/>
    <property type="match status" value="1"/>
</dbReference>
<dbReference type="Gene3D" id="3.90.170.10">
    <property type="entry name" value="Adenylosuccinate Synthetase, subunit A, domain 3"/>
    <property type="match status" value="1"/>
</dbReference>
<dbReference type="HAMAP" id="MF_00011">
    <property type="entry name" value="Adenylosucc_synth"/>
    <property type="match status" value="1"/>
</dbReference>
<dbReference type="InterPro" id="IPR018220">
    <property type="entry name" value="Adenylosuccin_syn_GTP-bd"/>
</dbReference>
<dbReference type="InterPro" id="IPR033128">
    <property type="entry name" value="Adenylosuccin_syn_Lys_AS"/>
</dbReference>
<dbReference type="InterPro" id="IPR042109">
    <property type="entry name" value="Adenylosuccinate_synth_dom1"/>
</dbReference>
<dbReference type="InterPro" id="IPR042110">
    <property type="entry name" value="Adenylosuccinate_synth_dom2"/>
</dbReference>
<dbReference type="InterPro" id="IPR042111">
    <property type="entry name" value="Adenylosuccinate_synth_dom3"/>
</dbReference>
<dbReference type="InterPro" id="IPR001114">
    <property type="entry name" value="Adenylosuccinate_synthetase"/>
</dbReference>
<dbReference type="InterPro" id="IPR027417">
    <property type="entry name" value="P-loop_NTPase"/>
</dbReference>
<dbReference type="NCBIfam" id="NF002223">
    <property type="entry name" value="PRK01117.1"/>
    <property type="match status" value="1"/>
</dbReference>
<dbReference type="NCBIfam" id="TIGR00184">
    <property type="entry name" value="purA"/>
    <property type="match status" value="1"/>
</dbReference>
<dbReference type="PANTHER" id="PTHR11846">
    <property type="entry name" value="ADENYLOSUCCINATE SYNTHETASE"/>
    <property type="match status" value="1"/>
</dbReference>
<dbReference type="PANTHER" id="PTHR11846:SF0">
    <property type="entry name" value="ADENYLOSUCCINATE SYNTHETASE"/>
    <property type="match status" value="1"/>
</dbReference>
<dbReference type="Pfam" id="PF00709">
    <property type="entry name" value="Adenylsucc_synt"/>
    <property type="match status" value="1"/>
</dbReference>
<dbReference type="SMART" id="SM00788">
    <property type="entry name" value="Adenylsucc_synt"/>
    <property type="match status" value="1"/>
</dbReference>
<dbReference type="SUPFAM" id="SSF52540">
    <property type="entry name" value="P-loop containing nucleoside triphosphate hydrolases"/>
    <property type="match status" value="1"/>
</dbReference>
<dbReference type="PROSITE" id="PS01266">
    <property type="entry name" value="ADENYLOSUCCIN_SYN_1"/>
    <property type="match status" value="1"/>
</dbReference>
<dbReference type="PROSITE" id="PS00513">
    <property type="entry name" value="ADENYLOSUCCIN_SYN_2"/>
    <property type="match status" value="1"/>
</dbReference>
<comment type="function">
    <text evidence="1">Plays an important role in the de novo pathway of purine nucleotide biosynthesis. Catalyzes the first committed step in the biosynthesis of AMP from IMP.</text>
</comment>
<comment type="catalytic activity">
    <reaction evidence="1">
        <text>IMP + L-aspartate + GTP = N(6)-(1,2-dicarboxyethyl)-AMP + GDP + phosphate + 2 H(+)</text>
        <dbReference type="Rhea" id="RHEA:15753"/>
        <dbReference type="ChEBI" id="CHEBI:15378"/>
        <dbReference type="ChEBI" id="CHEBI:29991"/>
        <dbReference type="ChEBI" id="CHEBI:37565"/>
        <dbReference type="ChEBI" id="CHEBI:43474"/>
        <dbReference type="ChEBI" id="CHEBI:57567"/>
        <dbReference type="ChEBI" id="CHEBI:58053"/>
        <dbReference type="ChEBI" id="CHEBI:58189"/>
        <dbReference type="EC" id="6.3.4.4"/>
    </reaction>
</comment>
<comment type="cofactor">
    <cofactor evidence="1">
        <name>Mg(2+)</name>
        <dbReference type="ChEBI" id="CHEBI:18420"/>
    </cofactor>
    <text evidence="1">Binds 1 Mg(2+) ion per subunit.</text>
</comment>
<comment type="pathway">
    <text evidence="1">Purine metabolism; AMP biosynthesis via de novo pathway; AMP from IMP: step 1/2.</text>
</comment>
<comment type="subunit">
    <text evidence="1">Homodimer.</text>
</comment>
<comment type="subcellular location">
    <subcellularLocation>
        <location evidence="1">Cytoplasm</location>
    </subcellularLocation>
</comment>
<comment type="similarity">
    <text evidence="1">Belongs to the adenylosuccinate synthetase family.</text>
</comment>
<accession>A1ALC9</accession>
<organism>
    <name type="scientific">Pelobacter propionicus (strain DSM 2379 / NBRC 103807 / OttBd1)</name>
    <dbReference type="NCBI Taxonomy" id="338966"/>
    <lineage>
        <taxon>Bacteria</taxon>
        <taxon>Pseudomonadati</taxon>
        <taxon>Thermodesulfobacteriota</taxon>
        <taxon>Desulfuromonadia</taxon>
        <taxon>Desulfuromonadales</taxon>
        <taxon>Desulfuromonadaceae</taxon>
        <taxon>Pelobacter</taxon>
    </lineage>
</organism>
<sequence length="430" mass="46971">MANVAIVGAQWGDEGKGKVVDIYTEYADDIVRFQGGNNAGHTLVVGNEKVVLHLIPSGILHEGKRCIIGNGVVLDPEVFIKEIVKLKESGRLTDDSCLLLSESLHIIMPYHKRIDIAREARSGDRKIGTTGRGIGPCYEDKIGRRGIRLMDLLNRDVFARRLKEFLVEKNFLLEKMLGEAPCDYDQILEEYSGYAEVLRAYMADTALIINNDLQAGKKILFEGAQGTLLDVDFGTYPFVTSSSTCAGGVCTGSGVGPRHIHEIIGISKAYVTRVGSGPFPTELFDADGDRLRDAGGEFGSTTGRPRRCGWFDAMVIRYAVRTNGLTGIALTKLDVLSGFDSIKICTGYTLDGKALETLPSAPEAFENCQPVYEELPGWNADISGAKSFEELPDSARAYVKRLEELAGCPIVLVSVGARRDQTIILRNPFL</sequence>
<evidence type="ECO:0000255" key="1">
    <source>
        <dbReference type="HAMAP-Rule" id="MF_00011"/>
    </source>
</evidence>